<name>RECR_RHOPA</name>
<reference key="1">
    <citation type="journal article" date="2004" name="Nat. Biotechnol.">
        <title>Complete genome sequence of the metabolically versatile photosynthetic bacterium Rhodopseudomonas palustris.</title>
        <authorList>
            <person name="Larimer F.W."/>
            <person name="Chain P."/>
            <person name="Hauser L."/>
            <person name="Lamerdin J.E."/>
            <person name="Malfatti S."/>
            <person name="Do L."/>
            <person name="Land M.L."/>
            <person name="Pelletier D.A."/>
            <person name="Beatty J.T."/>
            <person name="Lang A.S."/>
            <person name="Tabita F.R."/>
            <person name="Gibson J.L."/>
            <person name="Hanson T.E."/>
            <person name="Bobst C."/>
            <person name="Torres y Torres J.L."/>
            <person name="Peres C."/>
            <person name="Harrison F.H."/>
            <person name="Gibson J."/>
            <person name="Harwood C.S."/>
        </authorList>
    </citation>
    <scope>NUCLEOTIDE SEQUENCE [LARGE SCALE GENOMIC DNA]</scope>
    <source>
        <strain>ATCC BAA-98 / CGA009</strain>
    </source>
</reference>
<comment type="function">
    <text evidence="1">May play a role in DNA repair. It seems to be involved in an RecBC-independent recombinational process of DNA repair. It may act with RecF and RecO.</text>
</comment>
<comment type="similarity">
    <text evidence="1">Belongs to the RecR family.</text>
</comment>
<organism>
    <name type="scientific">Rhodopseudomonas palustris (strain ATCC BAA-98 / CGA009)</name>
    <dbReference type="NCBI Taxonomy" id="258594"/>
    <lineage>
        <taxon>Bacteria</taxon>
        <taxon>Pseudomonadati</taxon>
        <taxon>Pseudomonadota</taxon>
        <taxon>Alphaproteobacteria</taxon>
        <taxon>Hyphomicrobiales</taxon>
        <taxon>Nitrobacteraceae</taxon>
        <taxon>Rhodopseudomonas</taxon>
    </lineage>
</organism>
<dbReference type="EMBL" id="BX572594">
    <property type="protein sequence ID" value="CAE26061.1"/>
    <property type="molecule type" value="Genomic_DNA"/>
</dbReference>
<dbReference type="RefSeq" id="WP_011156185.1">
    <property type="nucleotide sequence ID" value="NZ_CP116810.1"/>
</dbReference>
<dbReference type="SMR" id="Q6NC55"/>
<dbReference type="STRING" id="258594.RPA0617"/>
<dbReference type="GeneID" id="66891638"/>
<dbReference type="eggNOG" id="COG0353">
    <property type="taxonomic scope" value="Bacteria"/>
</dbReference>
<dbReference type="HOGENOM" id="CLU_060739_1_1_5"/>
<dbReference type="PhylomeDB" id="Q6NC55"/>
<dbReference type="GO" id="GO:0003677">
    <property type="term" value="F:DNA binding"/>
    <property type="evidence" value="ECO:0007669"/>
    <property type="project" value="UniProtKB-UniRule"/>
</dbReference>
<dbReference type="GO" id="GO:0008270">
    <property type="term" value="F:zinc ion binding"/>
    <property type="evidence" value="ECO:0007669"/>
    <property type="project" value="UniProtKB-KW"/>
</dbReference>
<dbReference type="GO" id="GO:0006310">
    <property type="term" value="P:DNA recombination"/>
    <property type="evidence" value="ECO:0007669"/>
    <property type="project" value="UniProtKB-UniRule"/>
</dbReference>
<dbReference type="GO" id="GO:0006281">
    <property type="term" value="P:DNA repair"/>
    <property type="evidence" value="ECO:0007669"/>
    <property type="project" value="UniProtKB-UniRule"/>
</dbReference>
<dbReference type="CDD" id="cd01025">
    <property type="entry name" value="TOPRIM_recR"/>
    <property type="match status" value="1"/>
</dbReference>
<dbReference type="Gene3D" id="3.40.1360.10">
    <property type="match status" value="1"/>
</dbReference>
<dbReference type="Gene3D" id="6.10.250.240">
    <property type="match status" value="1"/>
</dbReference>
<dbReference type="Gene3D" id="1.10.8.420">
    <property type="entry name" value="RecR Domain 1"/>
    <property type="match status" value="1"/>
</dbReference>
<dbReference type="HAMAP" id="MF_00017">
    <property type="entry name" value="RecR"/>
    <property type="match status" value="1"/>
</dbReference>
<dbReference type="InterPro" id="IPR000093">
    <property type="entry name" value="DNA_Rcmb_RecR"/>
</dbReference>
<dbReference type="InterPro" id="IPR023627">
    <property type="entry name" value="Rcmb_RecR"/>
</dbReference>
<dbReference type="InterPro" id="IPR015967">
    <property type="entry name" value="Rcmb_RecR_Znf"/>
</dbReference>
<dbReference type="InterPro" id="IPR006171">
    <property type="entry name" value="TOPRIM_dom"/>
</dbReference>
<dbReference type="InterPro" id="IPR034137">
    <property type="entry name" value="TOPRIM_RecR"/>
</dbReference>
<dbReference type="NCBIfam" id="TIGR00615">
    <property type="entry name" value="recR"/>
    <property type="match status" value="1"/>
</dbReference>
<dbReference type="PANTHER" id="PTHR30446">
    <property type="entry name" value="RECOMBINATION PROTEIN RECR"/>
    <property type="match status" value="1"/>
</dbReference>
<dbReference type="PANTHER" id="PTHR30446:SF0">
    <property type="entry name" value="RECOMBINATION PROTEIN RECR"/>
    <property type="match status" value="1"/>
</dbReference>
<dbReference type="Pfam" id="PF21175">
    <property type="entry name" value="RecR_C"/>
    <property type="match status" value="1"/>
</dbReference>
<dbReference type="Pfam" id="PF21176">
    <property type="entry name" value="RecR_HhH"/>
    <property type="match status" value="1"/>
</dbReference>
<dbReference type="Pfam" id="PF13662">
    <property type="entry name" value="Toprim_4"/>
    <property type="match status" value="1"/>
</dbReference>
<dbReference type="SMART" id="SM00493">
    <property type="entry name" value="TOPRIM"/>
    <property type="match status" value="1"/>
</dbReference>
<dbReference type="SUPFAM" id="SSF111304">
    <property type="entry name" value="Recombination protein RecR"/>
    <property type="match status" value="1"/>
</dbReference>
<dbReference type="PROSITE" id="PS01300">
    <property type="entry name" value="RECR"/>
    <property type="match status" value="1"/>
</dbReference>
<dbReference type="PROSITE" id="PS50880">
    <property type="entry name" value="TOPRIM"/>
    <property type="match status" value="1"/>
</dbReference>
<accession>Q6NC55</accession>
<proteinExistence type="inferred from homology"/>
<keyword id="KW-0227">DNA damage</keyword>
<keyword id="KW-0233">DNA recombination</keyword>
<keyword id="KW-0234">DNA repair</keyword>
<keyword id="KW-0479">Metal-binding</keyword>
<keyword id="KW-0862">Zinc</keyword>
<keyword id="KW-0863">Zinc-finger</keyword>
<feature type="chain" id="PRO_0000190373" description="Recombination protein RecR">
    <location>
        <begin position="1"/>
        <end position="200"/>
    </location>
</feature>
<feature type="domain" description="Toprim" evidence="1">
    <location>
        <begin position="82"/>
        <end position="177"/>
    </location>
</feature>
<feature type="zinc finger region" description="C4-type" evidence="1">
    <location>
        <begin position="59"/>
        <end position="74"/>
    </location>
</feature>
<protein>
    <recommendedName>
        <fullName evidence="1">Recombination protein RecR</fullName>
    </recommendedName>
</protein>
<sequence>MAGAAGPEIERLIQLLARLPGLGPRSARRAALHLIKKRDALMAPLASALQVAIDKIEVCSTCGNIDSQNPCTVCTDPRRDSSIIVVVADVADLWALERASATNGRYHVLGATLSPLDGVGPEDLTIDALVKRAHDPGVAEIILALNATVDGQTTAHYVTDLLQDANVKVTRLAHGVPVGGELDYLDEGTLSAAMRQRTLF</sequence>
<evidence type="ECO:0000255" key="1">
    <source>
        <dbReference type="HAMAP-Rule" id="MF_00017"/>
    </source>
</evidence>
<gene>
    <name evidence="1" type="primary">recR</name>
    <name type="ordered locus">RPA0617</name>
</gene>